<gene>
    <name type="ORF">14</name>
</gene>
<sequence length="160" mass="18706">MYPFKHSPHCITDEECDLQLRSFCSWIRVIEMRCTDWTIQYICSCETPRSLFCLSLIRVLTAHWAKTVVNFVAQHDHQPQLPLNLILYTYATHCRLCNLNPALEQIYTAVTVARRQGAYTRLEGQTLYVCLPRDIVNYPCIACFYHLLLRLPVAINFHVI</sequence>
<keyword id="KW-1185">Reference proteome</keyword>
<protein>
    <recommendedName>
        <fullName>Uncharacterized protein ORF14</fullName>
    </recommendedName>
</protein>
<name>YO14_ADEG1</name>
<reference key="1">
    <citation type="journal article" date="1996" name="J. Virol.">
        <title>The complete DNA sequence and genomic organization of the avian adenovirus CELO.</title>
        <authorList>
            <person name="Chiocca S."/>
            <person name="Kurzbauer R."/>
            <person name="Schaffner G."/>
            <person name="Baker A."/>
            <person name="Mautner V."/>
            <person name="Cotten M."/>
        </authorList>
    </citation>
    <scope>NUCLEOTIDE SEQUENCE [LARGE SCALE GENOMIC DNA]</scope>
</reference>
<organismHost>
    <name type="scientific">Galliformes</name>
    <dbReference type="NCBI Taxonomy" id="8976"/>
</organismHost>
<organism>
    <name type="scientific">Fowl adenovirus A serotype 1 (strain CELO / Phelps)</name>
    <name type="common">FAdV-1</name>
    <name type="synonym">Avian adenovirus gal1 (strain Phelps)</name>
    <dbReference type="NCBI Taxonomy" id="10553"/>
    <lineage>
        <taxon>Viruses</taxon>
        <taxon>Varidnaviria</taxon>
        <taxon>Bamfordvirae</taxon>
        <taxon>Preplasmiviricota</taxon>
        <taxon>Tectiliviricetes</taxon>
        <taxon>Rowavirales</taxon>
        <taxon>Adenoviridae</taxon>
        <taxon>Aviadenovirus</taxon>
        <taxon>Fowl aviadenovirus A</taxon>
    </lineage>
</organism>
<proteinExistence type="predicted"/>
<feature type="chain" id="PRO_0000338996" description="Uncharacterized protein ORF14">
    <location>
        <begin position="1"/>
        <end position="160"/>
    </location>
</feature>
<accession>Q64745</accession>
<dbReference type="EMBL" id="U46933">
    <property type="protein sequence ID" value="AAC54898.1"/>
    <property type="molecule type" value="Genomic_DNA"/>
</dbReference>
<dbReference type="RefSeq" id="NP_043872.1">
    <property type="nucleotide sequence ID" value="NC_001720.1"/>
</dbReference>
<dbReference type="KEGG" id="vg:1733480"/>
<dbReference type="Proteomes" id="UP000001594">
    <property type="component" value="Segment"/>
</dbReference>